<gene>
    <name evidence="1" type="primary">mltF</name>
    <name type="ordered locus">Shal_1379</name>
</gene>
<organism>
    <name type="scientific">Shewanella halifaxensis (strain HAW-EB4)</name>
    <dbReference type="NCBI Taxonomy" id="458817"/>
    <lineage>
        <taxon>Bacteria</taxon>
        <taxon>Pseudomonadati</taxon>
        <taxon>Pseudomonadota</taxon>
        <taxon>Gammaproteobacteria</taxon>
        <taxon>Alteromonadales</taxon>
        <taxon>Shewanellaceae</taxon>
        <taxon>Shewanella</taxon>
    </lineage>
</organism>
<comment type="function">
    <text evidence="1">Murein-degrading enzyme that degrades murein glycan strands and insoluble, high-molecular weight murein sacculi, with the concomitant formation of a 1,6-anhydromuramoyl product. Lytic transglycosylases (LTs) play an integral role in the metabolism of the peptidoglycan (PG) sacculus. Their lytic action creates space within the PG sacculus to allow for its expansion as well as for the insertion of various structures such as secretion systems and flagella.</text>
</comment>
<comment type="catalytic activity">
    <reaction evidence="1">
        <text>Exolytic cleavage of the (1-&gt;4)-beta-glycosidic linkage between N-acetylmuramic acid (MurNAc) and N-acetylglucosamine (GlcNAc) residues in peptidoglycan, from either the reducing or the non-reducing ends of the peptidoglycan chains, with concomitant formation of a 1,6-anhydrobond in the MurNAc residue.</text>
        <dbReference type="EC" id="4.2.2.n1"/>
    </reaction>
</comment>
<comment type="subcellular location">
    <subcellularLocation>
        <location>Cell outer membrane</location>
        <topology>Peripheral membrane protein</topology>
    </subcellularLocation>
    <text evidence="1">Attached to the inner leaflet of the outer membrane.</text>
</comment>
<comment type="domain">
    <text evidence="1">The N-terminal domain does not have lytic activity and probably modulates enzymatic activity. The C-terminal domain is the catalytic active domain.</text>
</comment>
<comment type="similarity">
    <text evidence="1">In the N-terminal section; belongs to the bacterial solute-binding protein 3 family.</text>
</comment>
<comment type="similarity">
    <text evidence="1">In the C-terminal section; belongs to the transglycosylase Slt family.</text>
</comment>
<name>MLTF_SHEHH</name>
<evidence type="ECO:0000255" key="1">
    <source>
        <dbReference type="HAMAP-Rule" id="MF_02016"/>
    </source>
</evidence>
<accession>B0TLJ6</accession>
<feature type="signal peptide" evidence="1">
    <location>
        <begin position="1"/>
        <end position="15"/>
    </location>
</feature>
<feature type="chain" id="PRO_0000353978" description="Membrane-bound lytic murein transglycosylase F">
    <location>
        <begin position="16"/>
        <end position="475"/>
    </location>
</feature>
<feature type="region of interest" description="Non-LT domain" evidence="1">
    <location>
        <begin position="16"/>
        <end position="258"/>
    </location>
</feature>
<feature type="region of interest" description="LT domain" evidence="1">
    <location>
        <begin position="259"/>
        <end position="475"/>
    </location>
</feature>
<feature type="active site" evidence="1">
    <location>
        <position position="303"/>
    </location>
</feature>
<reference key="1">
    <citation type="submission" date="2008-01" db="EMBL/GenBank/DDBJ databases">
        <title>Complete sequence of Shewanella halifaxensis HAW-EB4.</title>
        <authorList>
            <consortium name="US DOE Joint Genome Institute"/>
            <person name="Copeland A."/>
            <person name="Lucas S."/>
            <person name="Lapidus A."/>
            <person name="Glavina del Rio T."/>
            <person name="Dalin E."/>
            <person name="Tice H."/>
            <person name="Bruce D."/>
            <person name="Goodwin L."/>
            <person name="Pitluck S."/>
            <person name="Sims D."/>
            <person name="Brettin T."/>
            <person name="Detter J.C."/>
            <person name="Han C."/>
            <person name="Kuske C.R."/>
            <person name="Schmutz J."/>
            <person name="Larimer F."/>
            <person name="Land M."/>
            <person name="Hauser L."/>
            <person name="Kyrpides N."/>
            <person name="Kim E."/>
            <person name="Zhao J.-S."/>
            <person name="Richardson P."/>
        </authorList>
    </citation>
    <scope>NUCLEOTIDE SEQUENCE [LARGE SCALE GENOMIC DNA]</scope>
    <source>
        <strain>HAW-EB4</strain>
    </source>
</reference>
<dbReference type="EC" id="4.2.2.n1" evidence="1"/>
<dbReference type="EMBL" id="CP000931">
    <property type="protein sequence ID" value="ABZ75946.1"/>
    <property type="molecule type" value="Genomic_DNA"/>
</dbReference>
<dbReference type="RefSeq" id="WP_012276486.1">
    <property type="nucleotide sequence ID" value="NC_010334.1"/>
</dbReference>
<dbReference type="SMR" id="B0TLJ6"/>
<dbReference type="STRING" id="458817.Shal_1379"/>
<dbReference type="CAZy" id="GH23">
    <property type="family name" value="Glycoside Hydrolase Family 23"/>
</dbReference>
<dbReference type="KEGG" id="shl:Shal_1379"/>
<dbReference type="eggNOG" id="COG4623">
    <property type="taxonomic scope" value="Bacteria"/>
</dbReference>
<dbReference type="HOGENOM" id="CLU_027494_0_1_6"/>
<dbReference type="OrthoDB" id="9815002at2"/>
<dbReference type="Proteomes" id="UP000001317">
    <property type="component" value="Chromosome"/>
</dbReference>
<dbReference type="GO" id="GO:0009279">
    <property type="term" value="C:cell outer membrane"/>
    <property type="evidence" value="ECO:0007669"/>
    <property type="project" value="UniProtKB-SubCell"/>
</dbReference>
<dbReference type="GO" id="GO:0008933">
    <property type="term" value="F:peptidoglycan lytic transglycosylase activity"/>
    <property type="evidence" value="ECO:0007669"/>
    <property type="project" value="UniProtKB-UniRule"/>
</dbReference>
<dbReference type="GO" id="GO:0016998">
    <property type="term" value="P:cell wall macromolecule catabolic process"/>
    <property type="evidence" value="ECO:0007669"/>
    <property type="project" value="UniProtKB-UniRule"/>
</dbReference>
<dbReference type="GO" id="GO:0071555">
    <property type="term" value="P:cell wall organization"/>
    <property type="evidence" value="ECO:0007669"/>
    <property type="project" value="UniProtKB-KW"/>
</dbReference>
<dbReference type="GO" id="GO:0009253">
    <property type="term" value="P:peptidoglycan catabolic process"/>
    <property type="evidence" value="ECO:0007669"/>
    <property type="project" value="TreeGrafter"/>
</dbReference>
<dbReference type="CDD" id="cd13403">
    <property type="entry name" value="MLTF-like"/>
    <property type="match status" value="1"/>
</dbReference>
<dbReference type="CDD" id="cd01009">
    <property type="entry name" value="PBP2_YfhD_N"/>
    <property type="match status" value="1"/>
</dbReference>
<dbReference type="FunFam" id="1.10.530.10:FF:000003">
    <property type="entry name" value="Membrane-bound lytic murein transglycosylase F"/>
    <property type="match status" value="1"/>
</dbReference>
<dbReference type="Gene3D" id="1.10.530.10">
    <property type="match status" value="1"/>
</dbReference>
<dbReference type="Gene3D" id="3.40.190.10">
    <property type="entry name" value="Periplasmic binding protein-like II"/>
    <property type="match status" value="2"/>
</dbReference>
<dbReference type="HAMAP" id="MF_02016">
    <property type="entry name" value="MltF"/>
    <property type="match status" value="1"/>
</dbReference>
<dbReference type="InterPro" id="IPR023346">
    <property type="entry name" value="Lysozyme-like_dom_sf"/>
</dbReference>
<dbReference type="InterPro" id="IPR023703">
    <property type="entry name" value="MltF"/>
</dbReference>
<dbReference type="InterPro" id="IPR001638">
    <property type="entry name" value="Solute-binding_3/MltF_N"/>
</dbReference>
<dbReference type="InterPro" id="IPR008258">
    <property type="entry name" value="Transglycosylase_SLT_dom_1"/>
</dbReference>
<dbReference type="NCBIfam" id="NF008112">
    <property type="entry name" value="PRK10859.1"/>
    <property type="match status" value="1"/>
</dbReference>
<dbReference type="PANTHER" id="PTHR35936">
    <property type="entry name" value="MEMBRANE-BOUND LYTIC MUREIN TRANSGLYCOSYLASE F"/>
    <property type="match status" value="1"/>
</dbReference>
<dbReference type="PANTHER" id="PTHR35936:SF32">
    <property type="entry name" value="MEMBRANE-BOUND LYTIC MUREIN TRANSGLYCOSYLASE F"/>
    <property type="match status" value="1"/>
</dbReference>
<dbReference type="Pfam" id="PF00497">
    <property type="entry name" value="SBP_bac_3"/>
    <property type="match status" value="1"/>
</dbReference>
<dbReference type="Pfam" id="PF01464">
    <property type="entry name" value="SLT"/>
    <property type="match status" value="1"/>
</dbReference>
<dbReference type="SMART" id="SM00062">
    <property type="entry name" value="PBPb"/>
    <property type="match status" value="1"/>
</dbReference>
<dbReference type="SUPFAM" id="SSF53955">
    <property type="entry name" value="Lysozyme-like"/>
    <property type="match status" value="1"/>
</dbReference>
<dbReference type="SUPFAM" id="SSF53850">
    <property type="entry name" value="Periplasmic binding protein-like II"/>
    <property type="match status" value="1"/>
</dbReference>
<dbReference type="PROSITE" id="PS51257">
    <property type="entry name" value="PROKAR_LIPOPROTEIN"/>
    <property type="match status" value="1"/>
</dbReference>
<sequence length="475" mass="54273">MKKLLLILCCITLLAACQKVVVEQEEPVFIPEPTELVVGTLYGPQIYFTSGQGDSGYDYEMAERFAKYLNLKLKMRAFANISELYAAMRSGEIDIIAAGLGDTPARREQFRVGPPLYRVDQVLVYRQGTPVPKNINSLNGEITVITDSSFVDTLTDLQKSNPDLVWNQEKDKDAEELLTMIAAGDIPYTIADSTSLDINRRFMPELREGLVLKKKQPVVWLLPANNSDKLMSQLLAFWHIEKRSGTLAHLNEKYFAHVKRFDYVDTRAFIRAIDNKLPKYQSTFEKYAGDIDWRKLAATAYQESHWNPNARSPTGVRGLMMLTLPTAKQVGIKNRLDPYQSIQGGAKYLNSMLERLPESIPDSQRMWFALASYNIGLGHVEDARKLAQTQGLNPSAWRDVKSVLPLLQKRKYYKKTRYGYARGNEAVHYVDSIRRYYDTLVWIDNQNMLLELKKENIQMAENLEQKTEAAQPQQP</sequence>
<proteinExistence type="inferred from homology"/>
<protein>
    <recommendedName>
        <fullName evidence="1">Membrane-bound lytic murein transglycosylase F</fullName>
        <ecNumber evidence="1">4.2.2.n1</ecNumber>
    </recommendedName>
    <alternativeName>
        <fullName evidence="1">Murein lyase F</fullName>
    </alternativeName>
</protein>
<keyword id="KW-0998">Cell outer membrane</keyword>
<keyword id="KW-0961">Cell wall biogenesis/degradation</keyword>
<keyword id="KW-0456">Lyase</keyword>
<keyword id="KW-0472">Membrane</keyword>
<keyword id="KW-0732">Signal</keyword>